<organism>
    <name type="scientific">Oryza sativa subsp. japonica</name>
    <name type="common">Rice</name>
    <dbReference type="NCBI Taxonomy" id="39947"/>
    <lineage>
        <taxon>Eukaryota</taxon>
        <taxon>Viridiplantae</taxon>
        <taxon>Streptophyta</taxon>
        <taxon>Embryophyta</taxon>
        <taxon>Tracheophyta</taxon>
        <taxon>Spermatophyta</taxon>
        <taxon>Magnoliopsida</taxon>
        <taxon>Liliopsida</taxon>
        <taxon>Poales</taxon>
        <taxon>Poaceae</taxon>
        <taxon>BOP clade</taxon>
        <taxon>Oryzoideae</taxon>
        <taxon>Oryzeae</taxon>
        <taxon>Oryzinae</taxon>
        <taxon>Oryza</taxon>
        <taxon>Oryza sativa</taxon>
    </lineage>
</organism>
<dbReference type="EMBL" id="AP005504">
    <property type="protein sequence ID" value="BAC57826.1"/>
    <property type="molecule type" value="Genomic_DNA"/>
</dbReference>
<dbReference type="EMBL" id="AP005847">
    <property type="protein sequence ID" value="BAC99898.1"/>
    <property type="molecule type" value="Genomic_DNA"/>
</dbReference>
<dbReference type="EMBL" id="AP008214">
    <property type="protein sequence ID" value="BAF22976.1"/>
    <property type="molecule type" value="Genomic_DNA"/>
</dbReference>
<dbReference type="EMBL" id="AP014964">
    <property type="protein sequence ID" value="BAT03958.1"/>
    <property type="molecule type" value="Genomic_DNA"/>
</dbReference>
<dbReference type="EMBL" id="CM000145">
    <property type="protein sequence ID" value="EAZ41613.1"/>
    <property type="molecule type" value="Genomic_DNA"/>
</dbReference>
<dbReference type="EMBL" id="AK059406">
    <property type="protein sequence ID" value="BAG86980.1"/>
    <property type="molecule type" value="mRNA"/>
</dbReference>
<dbReference type="EMBL" id="AK122061">
    <property type="protein sequence ID" value="BAH00775.1"/>
    <property type="molecule type" value="mRNA"/>
</dbReference>
<dbReference type="PDB" id="5H3G">
    <property type="method" value="X-ray"/>
    <property type="resolution" value="1.60 A"/>
    <property type="chains" value="A=1-91"/>
</dbReference>
<dbReference type="PDBsum" id="5H3G"/>
<dbReference type="SMR" id="Q84SC3"/>
<dbReference type="FunCoup" id="Q84SC3">
    <property type="interactions" value="2047"/>
</dbReference>
<dbReference type="STRING" id="39947.Q84SC3"/>
<dbReference type="PaxDb" id="39947-Q84SC3"/>
<dbReference type="EnsemblPlants" id="Os08t0162800-01">
    <property type="protein sequence ID" value="Os08t0162800-01"/>
    <property type="gene ID" value="Os08g0162800"/>
</dbReference>
<dbReference type="GeneID" id="4344735"/>
<dbReference type="Gramene" id="Os08t0162800-01">
    <property type="protein sequence ID" value="Os08t0162800-01"/>
    <property type="gene ID" value="Os08g0162800"/>
</dbReference>
<dbReference type="KEGG" id="dosa:Os08g0162800"/>
<dbReference type="KEGG" id="osa:4344735"/>
<dbReference type="eggNOG" id="KOG0817">
    <property type="taxonomic scope" value="Eukaryota"/>
</dbReference>
<dbReference type="HOGENOM" id="CLU_118853_4_1_1"/>
<dbReference type="InParanoid" id="Q84SC3"/>
<dbReference type="OMA" id="RYKFEAW"/>
<dbReference type="OrthoDB" id="346910at2759"/>
<dbReference type="Proteomes" id="UP000000763">
    <property type="component" value="Chromosome 8"/>
</dbReference>
<dbReference type="Proteomes" id="UP000007752">
    <property type="component" value="Chromosome 8"/>
</dbReference>
<dbReference type="Proteomes" id="UP000059680">
    <property type="component" value="Chromosome 8"/>
</dbReference>
<dbReference type="GO" id="GO:0005829">
    <property type="term" value="C:cytosol"/>
    <property type="evidence" value="ECO:0007669"/>
    <property type="project" value="UniProtKB-SubCell"/>
</dbReference>
<dbReference type="GO" id="GO:0000062">
    <property type="term" value="F:fatty-acyl-CoA binding"/>
    <property type="evidence" value="ECO:0000318"/>
    <property type="project" value="GO_Central"/>
</dbReference>
<dbReference type="GO" id="GO:0006631">
    <property type="term" value="P:fatty acid metabolic process"/>
    <property type="evidence" value="ECO:0000318"/>
    <property type="project" value="GO_Central"/>
</dbReference>
<dbReference type="FunFam" id="1.20.80.10:FF:000010">
    <property type="entry name" value="Acyl-CoA-binding domain-containing protein 5"/>
    <property type="match status" value="1"/>
</dbReference>
<dbReference type="Gene3D" id="1.20.80.10">
    <property type="match status" value="1"/>
</dbReference>
<dbReference type="InterPro" id="IPR022408">
    <property type="entry name" value="Acyl-CoA-binding_prot_CS"/>
</dbReference>
<dbReference type="InterPro" id="IPR000582">
    <property type="entry name" value="Acyl-CoA-binding_protein"/>
</dbReference>
<dbReference type="InterPro" id="IPR035984">
    <property type="entry name" value="Acyl-CoA-binding_sf"/>
</dbReference>
<dbReference type="InterPro" id="IPR014352">
    <property type="entry name" value="FERM/acyl-CoA-bd_prot_sf"/>
</dbReference>
<dbReference type="PANTHER" id="PTHR23310:SF62">
    <property type="entry name" value="ACYL-COA BINDING PROTEIN 1, ISOFORM A"/>
    <property type="match status" value="1"/>
</dbReference>
<dbReference type="PANTHER" id="PTHR23310">
    <property type="entry name" value="ACYL-COA-BINDING PROTEIN, ACBP"/>
    <property type="match status" value="1"/>
</dbReference>
<dbReference type="Pfam" id="PF00887">
    <property type="entry name" value="ACBP"/>
    <property type="match status" value="1"/>
</dbReference>
<dbReference type="PRINTS" id="PR00689">
    <property type="entry name" value="ACOABINDINGP"/>
</dbReference>
<dbReference type="SUPFAM" id="SSF47027">
    <property type="entry name" value="Acyl-CoA binding protein"/>
    <property type="match status" value="1"/>
</dbReference>
<dbReference type="PROSITE" id="PS00880">
    <property type="entry name" value="ACB_1"/>
    <property type="match status" value="1"/>
</dbReference>
<dbReference type="PROSITE" id="PS51228">
    <property type="entry name" value="ACB_2"/>
    <property type="match status" value="1"/>
</dbReference>
<protein>
    <recommendedName>
        <fullName evidence="6">Acyl-CoA-binding domain-containing protein 1</fullName>
        <shortName evidence="5">Acyl-CoA binding protein 1</shortName>
        <shortName evidence="5">OsACBP1</shortName>
    </recommendedName>
</protein>
<comment type="function">
    <text evidence="3 4">Binds medium- and long-chain acyl-CoA esters with high affinity. Can interact in vitro with palmitoyl-CoA, oleoyl-CoA, linoleoyl-CoA and linolenoyl-CoA (PubMed:21128943). Binds phosphatidic acid (PA) and phosphatidylcholine (PC) in vitro. May play a role in the biosynthesis of phospholipids (PubMed:24738983).</text>
</comment>
<comment type="subcellular location">
    <subcellularLocation>
        <location evidence="4">Cytoplasm</location>
        <location evidence="4">Cytosol</location>
    </subcellularLocation>
</comment>
<comment type="tissue specificity">
    <text evidence="3">Highly expressed in leaves. Expressed at low levels in roots and seeds.</text>
</comment>
<comment type="induction">
    <text evidence="3">Induced by cold stress. Down-regulated by wounding and infection with the rice blast fungus Magnaporthe oryzae.</text>
</comment>
<comment type="similarity">
    <text evidence="6">Belongs to the ACBP family.</text>
</comment>
<sequence length="91" mass="10143">MGLQEDFEQYAEKAKTLPESTSNENKLILYGLYKQATVGDVNTARPGIFAQRDRAKWDAWKAVEGKSKEEAMSDYITKVKQLLEEAAAAAS</sequence>
<feature type="chain" id="PRO_0000442031" description="Acyl-CoA-binding domain-containing protein 1">
    <location>
        <begin position="1"/>
        <end position="91"/>
    </location>
</feature>
<feature type="domain" description="ACB" evidence="2">
    <location>
        <begin position="3"/>
        <end position="88"/>
    </location>
</feature>
<feature type="binding site" evidence="1">
    <location>
        <position position="15"/>
    </location>
    <ligand>
        <name>an acyl-CoA</name>
        <dbReference type="ChEBI" id="CHEBI:58342"/>
    </ligand>
</feature>
<feature type="binding site" evidence="1">
    <location>
        <begin position="30"/>
        <end position="34"/>
    </location>
    <ligand>
        <name>an acyl-CoA</name>
        <dbReference type="ChEBI" id="CHEBI:58342"/>
    </ligand>
</feature>
<feature type="binding site" evidence="1">
    <location>
        <position position="56"/>
    </location>
    <ligand>
        <name>an acyl-CoA</name>
        <dbReference type="ChEBI" id="CHEBI:58342"/>
    </ligand>
</feature>
<feature type="binding site" evidence="1">
    <location>
        <position position="75"/>
    </location>
    <ligand>
        <name>an acyl-CoA</name>
        <dbReference type="ChEBI" id="CHEBI:58342"/>
    </ligand>
</feature>
<feature type="helix" evidence="11">
    <location>
        <begin position="1"/>
        <end position="14"/>
    </location>
</feature>
<feature type="helix" evidence="11">
    <location>
        <begin position="23"/>
        <end position="38"/>
    </location>
</feature>
<feature type="helix" evidence="11">
    <location>
        <begin position="54"/>
        <end position="61"/>
    </location>
</feature>
<feature type="turn" evidence="11">
    <location>
        <begin position="62"/>
        <end position="65"/>
    </location>
</feature>
<feature type="helix" evidence="11">
    <location>
        <begin position="68"/>
        <end position="89"/>
    </location>
</feature>
<accession>Q84SC3</accession>
<name>ACBP1_ORYSJ</name>
<reference key="1">
    <citation type="journal article" date="2005" name="Nature">
        <title>The map-based sequence of the rice genome.</title>
        <authorList>
            <consortium name="International rice genome sequencing project (IRGSP)"/>
        </authorList>
    </citation>
    <scope>NUCLEOTIDE SEQUENCE [LARGE SCALE GENOMIC DNA]</scope>
    <source>
        <strain>cv. Nipponbare</strain>
    </source>
</reference>
<reference key="2">
    <citation type="journal article" date="2008" name="Nucleic Acids Res.">
        <title>The rice annotation project database (RAP-DB): 2008 update.</title>
        <authorList>
            <consortium name="The rice annotation project (RAP)"/>
        </authorList>
    </citation>
    <scope>GENOME REANNOTATION</scope>
    <source>
        <strain>cv. Nipponbare</strain>
    </source>
</reference>
<reference key="3">
    <citation type="journal article" date="2013" name="Rice">
        <title>Improvement of the Oryza sativa Nipponbare reference genome using next generation sequence and optical map data.</title>
        <authorList>
            <person name="Kawahara Y."/>
            <person name="de la Bastide M."/>
            <person name="Hamilton J.P."/>
            <person name="Kanamori H."/>
            <person name="McCombie W.R."/>
            <person name="Ouyang S."/>
            <person name="Schwartz D.C."/>
            <person name="Tanaka T."/>
            <person name="Wu J."/>
            <person name="Zhou S."/>
            <person name="Childs K.L."/>
            <person name="Davidson R.M."/>
            <person name="Lin H."/>
            <person name="Quesada-Ocampo L."/>
            <person name="Vaillancourt B."/>
            <person name="Sakai H."/>
            <person name="Lee S.S."/>
            <person name="Kim J."/>
            <person name="Numa H."/>
            <person name="Itoh T."/>
            <person name="Buell C.R."/>
            <person name="Matsumoto T."/>
        </authorList>
    </citation>
    <scope>GENOME REANNOTATION</scope>
    <source>
        <strain>cv. Nipponbare</strain>
    </source>
</reference>
<reference key="4">
    <citation type="journal article" date="2005" name="PLoS Biol.">
        <title>The genomes of Oryza sativa: a history of duplications.</title>
        <authorList>
            <person name="Yu J."/>
            <person name="Wang J."/>
            <person name="Lin W."/>
            <person name="Li S."/>
            <person name="Li H."/>
            <person name="Zhou J."/>
            <person name="Ni P."/>
            <person name="Dong W."/>
            <person name="Hu S."/>
            <person name="Zeng C."/>
            <person name="Zhang J."/>
            <person name="Zhang Y."/>
            <person name="Li R."/>
            <person name="Xu Z."/>
            <person name="Li S."/>
            <person name="Li X."/>
            <person name="Zheng H."/>
            <person name="Cong L."/>
            <person name="Lin L."/>
            <person name="Yin J."/>
            <person name="Geng J."/>
            <person name="Li G."/>
            <person name="Shi J."/>
            <person name="Liu J."/>
            <person name="Lv H."/>
            <person name="Li J."/>
            <person name="Wang J."/>
            <person name="Deng Y."/>
            <person name="Ran L."/>
            <person name="Shi X."/>
            <person name="Wang X."/>
            <person name="Wu Q."/>
            <person name="Li C."/>
            <person name="Ren X."/>
            <person name="Wang J."/>
            <person name="Wang X."/>
            <person name="Li D."/>
            <person name="Liu D."/>
            <person name="Zhang X."/>
            <person name="Ji Z."/>
            <person name="Zhao W."/>
            <person name="Sun Y."/>
            <person name="Zhang Z."/>
            <person name="Bao J."/>
            <person name="Han Y."/>
            <person name="Dong L."/>
            <person name="Ji J."/>
            <person name="Chen P."/>
            <person name="Wu S."/>
            <person name="Liu J."/>
            <person name="Xiao Y."/>
            <person name="Bu D."/>
            <person name="Tan J."/>
            <person name="Yang L."/>
            <person name="Ye C."/>
            <person name="Zhang J."/>
            <person name="Xu J."/>
            <person name="Zhou Y."/>
            <person name="Yu Y."/>
            <person name="Zhang B."/>
            <person name="Zhuang S."/>
            <person name="Wei H."/>
            <person name="Liu B."/>
            <person name="Lei M."/>
            <person name="Yu H."/>
            <person name="Li Y."/>
            <person name="Xu H."/>
            <person name="Wei S."/>
            <person name="He X."/>
            <person name="Fang L."/>
            <person name="Zhang Z."/>
            <person name="Zhang Y."/>
            <person name="Huang X."/>
            <person name="Su Z."/>
            <person name="Tong W."/>
            <person name="Li J."/>
            <person name="Tong Z."/>
            <person name="Li S."/>
            <person name="Ye J."/>
            <person name="Wang L."/>
            <person name="Fang L."/>
            <person name="Lei T."/>
            <person name="Chen C.-S."/>
            <person name="Chen H.-C."/>
            <person name="Xu Z."/>
            <person name="Li H."/>
            <person name="Huang H."/>
            <person name="Zhang F."/>
            <person name="Xu H."/>
            <person name="Li N."/>
            <person name="Zhao C."/>
            <person name="Li S."/>
            <person name="Dong L."/>
            <person name="Huang Y."/>
            <person name="Li L."/>
            <person name="Xi Y."/>
            <person name="Qi Q."/>
            <person name="Li W."/>
            <person name="Zhang B."/>
            <person name="Hu W."/>
            <person name="Zhang Y."/>
            <person name="Tian X."/>
            <person name="Jiao Y."/>
            <person name="Liang X."/>
            <person name="Jin J."/>
            <person name="Gao L."/>
            <person name="Zheng W."/>
            <person name="Hao B."/>
            <person name="Liu S.-M."/>
            <person name="Wang W."/>
            <person name="Yuan L."/>
            <person name="Cao M."/>
            <person name="McDermott J."/>
            <person name="Samudrala R."/>
            <person name="Wang J."/>
            <person name="Wong G.K.-S."/>
            <person name="Yang H."/>
        </authorList>
    </citation>
    <scope>NUCLEOTIDE SEQUENCE [LARGE SCALE GENOMIC DNA]</scope>
    <source>
        <strain>cv. Nipponbare</strain>
    </source>
</reference>
<reference key="5">
    <citation type="journal article" date="2003" name="Science">
        <title>Collection, mapping, and annotation of over 28,000 cDNA clones from japonica rice.</title>
        <authorList>
            <consortium name="The rice full-length cDNA consortium"/>
        </authorList>
    </citation>
    <scope>NUCLEOTIDE SEQUENCE [LARGE SCALE MRNA]</scope>
    <source>
        <strain>cv. Nipponbare</strain>
    </source>
</reference>
<reference key="6">
    <citation type="journal article" date="2011" name="New Phytol.">
        <title>The rice acyl-CoA-binding protein gene family: phylogeny, expression and functional analysis.</title>
        <authorList>
            <person name="Meng W."/>
            <person name="Su Y.C."/>
            <person name="Saunders R.M."/>
            <person name="Chye M.L."/>
        </authorList>
    </citation>
    <scope>FUNCTION</scope>
    <scope>TISSUE SPECIFICITY</scope>
    <scope>INDUCTION</scope>
    <scope>GENE FAMILY</scope>
    <scope>NOMENCLATURE</scope>
</reference>
<reference key="7">
    <citation type="journal article" date="2014" name="New Phytol.">
        <title>Subcellular localization of rice acyl-CoA-binding proteins (ACBPs) indicates that OsACBP6::GFP is targeted to the peroxisomes.</title>
        <authorList>
            <person name="Meng W."/>
            <person name="Hsiao A.S."/>
            <person name="Gao C."/>
            <person name="Jiang L."/>
            <person name="Chye M.L."/>
        </authorList>
    </citation>
    <scope>FUNCTION</scope>
    <scope>SUBCELLULAR LOCATION</scope>
</reference>
<reference key="8">
    <citation type="journal article" date="2017" name="Acta Crystallogr. D">
        <title>The first plant acyl-CoA-binding protein structures: the close homologues OsACBP1 and OsACBP2 from rice.</title>
        <authorList>
            <person name="Guo Z.H."/>
            <person name="Chan W.H.Y."/>
            <person name="Kong G.K.W."/>
            <person name="Hao Q."/>
            <person name="Chye M.L."/>
        </authorList>
    </citation>
    <scope>X-RAY CRYSTALLOGRAPHY (1.60 ANGSTROMS)</scope>
</reference>
<evidence type="ECO:0000250" key="1">
    <source>
        <dbReference type="UniProtKB" id="P07107"/>
    </source>
</evidence>
<evidence type="ECO:0000255" key="2">
    <source>
        <dbReference type="PROSITE-ProRule" id="PRU00573"/>
    </source>
</evidence>
<evidence type="ECO:0000269" key="3">
    <source>
    </source>
</evidence>
<evidence type="ECO:0000269" key="4">
    <source>
    </source>
</evidence>
<evidence type="ECO:0000303" key="5">
    <source>
    </source>
</evidence>
<evidence type="ECO:0000305" key="6"/>
<evidence type="ECO:0000312" key="7">
    <source>
        <dbReference type="EMBL" id="BAC57826.1"/>
    </source>
</evidence>
<evidence type="ECO:0000312" key="8">
    <source>
        <dbReference type="EMBL" id="BAC99898.1"/>
    </source>
</evidence>
<evidence type="ECO:0000312" key="9">
    <source>
        <dbReference type="EMBL" id="BAF22976.1"/>
    </source>
</evidence>
<evidence type="ECO:0000312" key="10">
    <source>
        <dbReference type="EMBL" id="EAZ41613.1"/>
    </source>
</evidence>
<evidence type="ECO:0007829" key="11">
    <source>
        <dbReference type="PDB" id="5H3G"/>
    </source>
</evidence>
<proteinExistence type="evidence at protein level"/>
<gene>
    <name evidence="5" type="primary">ACBP1</name>
    <name evidence="9" type="ordered locus">Os08g0162800</name>
    <name evidence="6" type="ordered locus">LOC_Os08g06550</name>
    <name evidence="8" type="ORF">OJ9990_A01.106</name>
    <name evidence="10" type="ORF">OsJ_26146</name>
    <name evidence="7" type="ORF">P0577B11.140</name>
</gene>
<keyword id="KW-0002">3D-structure</keyword>
<keyword id="KW-0963">Cytoplasm</keyword>
<keyword id="KW-0446">Lipid-binding</keyword>
<keyword id="KW-1185">Reference proteome</keyword>